<name>ISPF_SYNC1</name>
<feature type="chain" id="PRO_0000237738" description="2-C-methyl-D-erythritol 2,4-cyclodiphosphate synthase">
    <location>
        <begin position="1"/>
        <end position="164"/>
    </location>
</feature>
<feature type="binding site" evidence="1">
    <location>
        <begin position="9"/>
        <end position="11"/>
    </location>
    <ligand>
        <name>4-CDP-2-C-methyl-D-erythritol 2-phosphate</name>
        <dbReference type="ChEBI" id="CHEBI:57919"/>
    </ligand>
</feature>
<feature type="binding site" evidence="1">
    <location>
        <position position="9"/>
    </location>
    <ligand>
        <name>a divalent metal cation</name>
        <dbReference type="ChEBI" id="CHEBI:60240"/>
    </ligand>
</feature>
<feature type="binding site" evidence="1">
    <location>
        <position position="11"/>
    </location>
    <ligand>
        <name>a divalent metal cation</name>
        <dbReference type="ChEBI" id="CHEBI:60240"/>
    </ligand>
</feature>
<feature type="binding site" evidence="1">
    <location>
        <begin position="35"/>
        <end position="36"/>
    </location>
    <ligand>
        <name>4-CDP-2-C-methyl-D-erythritol 2-phosphate</name>
        <dbReference type="ChEBI" id="CHEBI:57919"/>
    </ligand>
</feature>
<feature type="binding site" evidence="1">
    <location>
        <position position="43"/>
    </location>
    <ligand>
        <name>a divalent metal cation</name>
        <dbReference type="ChEBI" id="CHEBI:60240"/>
    </ligand>
</feature>
<feature type="binding site" evidence="1">
    <location>
        <begin position="57"/>
        <end position="59"/>
    </location>
    <ligand>
        <name>4-CDP-2-C-methyl-D-erythritol 2-phosphate</name>
        <dbReference type="ChEBI" id="CHEBI:57919"/>
    </ligand>
</feature>
<feature type="binding site" evidence="1">
    <location>
        <begin position="62"/>
        <end position="66"/>
    </location>
    <ligand>
        <name>4-CDP-2-C-methyl-D-erythritol 2-phosphate</name>
        <dbReference type="ChEBI" id="CHEBI:57919"/>
    </ligand>
</feature>
<feature type="binding site" evidence="1">
    <location>
        <begin position="133"/>
        <end position="136"/>
    </location>
    <ligand>
        <name>4-CDP-2-C-methyl-D-erythritol 2-phosphate</name>
        <dbReference type="ChEBI" id="CHEBI:57919"/>
    </ligand>
</feature>
<feature type="binding site" evidence="1">
    <location>
        <position position="140"/>
    </location>
    <ligand>
        <name>4-CDP-2-C-methyl-D-erythritol 2-phosphate</name>
        <dbReference type="ChEBI" id="CHEBI:57919"/>
    </ligand>
</feature>
<feature type="binding site" evidence="1">
    <location>
        <position position="143"/>
    </location>
    <ligand>
        <name>4-CDP-2-C-methyl-D-erythritol 2-phosphate</name>
        <dbReference type="ChEBI" id="CHEBI:57919"/>
    </ligand>
</feature>
<feature type="site" description="Transition state stabilizer" evidence="1">
    <location>
        <position position="35"/>
    </location>
</feature>
<feature type="site" description="Transition state stabilizer" evidence="1">
    <location>
        <position position="134"/>
    </location>
</feature>
<organism>
    <name type="scientific">Syntrophotalea carbinolica (strain DSM 2380 / NBRC 103641 / GraBd1)</name>
    <name type="common">Pelobacter carbinolicus</name>
    <dbReference type="NCBI Taxonomy" id="338963"/>
    <lineage>
        <taxon>Bacteria</taxon>
        <taxon>Pseudomonadati</taxon>
        <taxon>Thermodesulfobacteriota</taxon>
        <taxon>Desulfuromonadia</taxon>
        <taxon>Desulfuromonadales</taxon>
        <taxon>Syntrophotaleaceae</taxon>
        <taxon>Syntrophotalea</taxon>
    </lineage>
</organism>
<accession>Q3A8C7</accession>
<reference key="1">
    <citation type="submission" date="2005-10" db="EMBL/GenBank/DDBJ databases">
        <title>Complete sequence of Pelobacter carbinolicus DSM 2380.</title>
        <authorList>
            <person name="Copeland A."/>
            <person name="Lucas S."/>
            <person name="Lapidus A."/>
            <person name="Barry K."/>
            <person name="Detter J.C."/>
            <person name="Glavina T."/>
            <person name="Hammon N."/>
            <person name="Israni S."/>
            <person name="Pitluck S."/>
            <person name="Chertkov O."/>
            <person name="Schmutz J."/>
            <person name="Larimer F."/>
            <person name="Land M."/>
            <person name="Kyrpides N."/>
            <person name="Ivanova N."/>
            <person name="Richardson P."/>
        </authorList>
    </citation>
    <scope>NUCLEOTIDE SEQUENCE [LARGE SCALE GENOMIC DNA]</scope>
    <source>
        <strain>DSM 2380 / NBRC 103641 / GraBd1</strain>
    </source>
</reference>
<proteinExistence type="inferred from homology"/>
<dbReference type="EC" id="4.6.1.12" evidence="1"/>
<dbReference type="EMBL" id="CP000142">
    <property type="protein sequence ID" value="ABA87365.1"/>
    <property type="molecule type" value="Genomic_DNA"/>
</dbReference>
<dbReference type="RefSeq" id="WP_011339754.1">
    <property type="nucleotide sequence ID" value="NC_007498.2"/>
</dbReference>
<dbReference type="SMR" id="Q3A8C7"/>
<dbReference type="STRING" id="338963.Pcar_0102"/>
<dbReference type="KEGG" id="pca:Pcar_0102"/>
<dbReference type="eggNOG" id="COG0245">
    <property type="taxonomic scope" value="Bacteria"/>
</dbReference>
<dbReference type="HOGENOM" id="CLU_084630_2_0_7"/>
<dbReference type="OrthoDB" id="9804336at2"/>
<dbReference type="UniPathway" id="UPA00056">
    <property type="reaction ID" value="UER00095"/>
</dbReference>
<dbReference type="Proteomes" id="UP000002534">
    <property type="component" value="Chromosome"/>
</dbReference>
<dbReference type="GO" id="GO:0008685">
    <property type="term" value="F:2-C-methyl-D-erythritol 2,4-cyclodiphosphate synthase activity"/>
    <property type="evidence" value="ECO:0007669"/>
    <property type="project" value="UniProtKB-UniRule"/>
</dbReference>
<dbReference type="GO" id="GO:0046872">
    <property type="term" value="F:metal ion binding"/>
    <property type="evidence" value="ECO:0007669"/>
    <property type="project" value="UniProtKB-KW"/>
</dbReference>
<dbReference type="GO" id="GO:0019288">
    <property type="term" value="P:isopentenyl diphosphate biosynthetic process, methylerythritol 4-phosphate pathway"/>
    <property type="evidence" value="ECO:0007669"/>
    <property type="project" value="UniProtKB-UniRule"/>
</dbReference>
<dbReference type="GO" id="GO:0016114">
    <property type="term" value="P:terpenoid biosynthetic process"/>
    <property type="evidence" value="ECO:0007669"/>
    <property type="project" value="InterPro"/>
</dbReference>
<dbReference type="CDD" id="cd00554">
    <property type="entry name" value="MECDP_synthase"/>
    <property type="match status" value="1"/>
</dbReference>
<dbReference type="FunFam" id="3.30.1330.50:FF:000001">
    <property type="entry name" value="2-C-methyl-D-erythritol 2,4-cyclodiphosphate synthase"/>
    <property type="match status" value="1"/>
</dbReference>
<dbReference type="Gene3D" id="3.30.1330.50">
    <property type="entry name" value="2-C-methyl-D-erythritol 2,4-cyclodiphosphate synthase"/>
    <property type="match status" value="1"/>
</dbReference>
<dbReference type="HAMAP" id="MF_00107">
    <property type="entry name" value="IspF"/>
    <property type="match status" value="1"/>
</dbReference>
<dbReference type="InterPro" id="IPR003526">
    <property type="entry name" value="MECDP_synthase"/>
</dbReference>
<dbReference type="InterPro" id="IPR020555">
    <property type="entry name" value="MECDP_synthase_CS"/>
</dbReference>
<dbReference type="InterPro" id="IPR036571">
    <property type="entry name" value="MECDP_synthase_sf"/>
</dbReference>
<dbReference type="NCBIfam" id="TIGR00151">
    <property type="entry name" value="ispF"/>
    <property type="match status" value="1"/>
</dbReference>
<dbReference type="PANTHER" id="PTHR43181">
    <property type="entry name" value="2-C-METHYL-D-ERYTHRITOL 2,4-CYCLODIPHOSPHATE SYNTHASE, CHLOROPLASTIC"/>
    <property type="match status" value="1"/>
</dbReference>
<dbReference type="PANTHER" id="PTHR43181:SF1">
    <property type="entry name" value="2-C-METHYL-D-ERYTHRITOL 2,4-CYCLODIPHOSPHATE SYNTHASE, CHLOROPLASTIC"/>
    <property type="match status" value="1"/>
</dbReference>
<dbReference type="Pfam" id="PF02542">
    <property type="entry name" value="YgbB"/>
    <property type="match status" value="1"/>
</dbReference>
<dbReference type="SUPFAM" id="SSF69765">
    <property type="entry name" value="IpsF-like"/>
    <property type="match status" value="1"/>
</dbReference>
<dbReference type="PROSITE" id="PS01350">
    <property type="entry name" value="ISPF"/>
    <property type="match status" value="1"/>
</dbReference>
<evidence type="ECO:0000255" key="1">
    <source>
        <dbReference type="HAMAP-Rule" id="MF_00107"/>
    </source>
</evidence>
<protein>
    <recommendedName>
        <fullName evidence="1">2-C-methyl-D-erythritol 2,4-cyclodiphosphate synthase</fullName>
        <shortName evidence="1">MECDP-synthase</shortName>
        <shortName evidence="1">MECPP-synthase</shortName>
        <shortName evidence="1">MECPS</shortName>
        <ecNumber evidence="1">4.6.1.12</ecNumber>
    </recommendedName>
</protein>
<sequence>MMRIGHGYDVHQLVAERKLILGGVDIPHTLGLLGHSDADVLLHAICDAILGALGEGDIGKHFPDTDPAYKGISSIKLLHEVMRLAETKGYRLGNLDATIIAQRPKLAPFIGNMRENIAEACGTDVSRINVKATTTEQLGFEGRGEGISSHAVVLLNKAAHSEER</sequence>
<gene>
    <name evidence="1" type="primary">ispF</name>
    <name type="ordered locus">Pcar_0102</name>
</gene>
<keyword id="KW-0414">Isoprene biosynthesis</keyword>
<keyword id="KW-0456">Lyase</keyword>
<keyword id="KW-0479">Metal-binding</keyword>
<keyword id="KW-1185">Reference proteome</keyword>
<comment type="function">
    <text evidence="1">Involved in the biosynthesis of isopentenyl diphosphate (IPP) and dimethylallyl diphosphate (DMAPP), two major building blocks of isoprenoid compounds. Catalyzes the conversion of 4-diphosphocytidyl-2-C-methyl-D-erythritol 2-phosphate (CDP-ME2P) to 2-C-methyl-D-erythritol 2,4-cyclodiphosphate (ME-CPP) with a corresponding release of cytidine 5-monophosphate (CMP).</text>
</comment>
<comment type="catalytic activity">
    <reaction evidence="1">
        <text>4-CDP-2-C-methyl-D-erythritol 2-phosphate = 2-C-methyl-D-erythritol 2,4-cyclic diphosphate + CMP</text>
        <dbReference type="Rhea" id="RHEA:23864"/>
        <dbReference type="ChEBI" id="CHEBI:57919"/>
        <dbReference type="ChEBI" id="CHEBI:58483"/>
        <dbReference type="ChEBI" id="CHEBI:60377"/>
        <dbReference type="EC" id="4.6.1.12"/>
    </reaction>
</comment>
<comment type="cofactor">
    <cofactor evidence="1">
        <name>a divalent metal cation</name>
        <dbReference type="ChEBI" id="CHEBI:60240"/>
    </cofactor>
    <text evidence="1">Binds 1 divalent metal cation per subunit.</text>
</comment>
<comment type="pathway">
    <text evidence="1">Isoprenoid biosynthesis; isopentenyl diphosphate biosynthesis via DXP pathway; isopentenyl diphosphate from 1-deoxy-D-xylulose 5-phosphate: step 4/6.</text>
</comment>
<comment type="subunit">
    <text evidence="1">Homotrimer.</text>
</comment>
<comment type="similarity">
    <text evidence="1">Belongs to the IspF family.</text>
</comment>